<keyword id="KW-0997">Cell inner membrane</keyword>
<keyword id="KW-1003">Cell membrane</keyword>
<keyword id="KW-0963">Cytoplasm</keyword>
<keyword id="KW-0342">GTP-binding</keyword>
<keyword id="KW-0472">Membrane</keyword>
<keyword id="KW-0547">Nucleotide-binding</keyword>
<keyword id="KW-1185">Reference proteome</keyword>
<keyword id="KW-0690">Ribosome biogenesis</keyword>
<keyword id="KW-0694">RNA-binding</keyword>
<keyword id="KW-0699">rRNA-binding</keyword>
<protein>
    <recommendedName>
        <fullName evidence="1">GTPase Era</fullName>
    </recommendedName>
</protein>
<dbReference type="EMBL" id="BX640418">
    <property type="protein sequence ID" value="CAE42702.1"/>
    <property type="molecule type" value="Genomic_DNA"/>
</dbReference>
<dbReference type="RefSeq" id="NP_881058.1">
    <property type="nucleotide sequence ID" value="NC_002929.2"/>
</dbReference>
<dbReference type="RefSeq" id="WP_003813784.1">
    <property type="nucleotide sequence ID" value="NZ_CP039022.1"/>
</dbReference>
<dbReference type="SMR" id="Q7VW40"/>
<dbReference type="STRING" id="257313.BP2430"/>
<dbReference type="PaxDb" id="257313-BP2430"/>
<dbReference type="GeneID" id="93205076"/>
<dbReference type="KEGG" id="bpe:BP2430"/>
<dbReference type="PATRIC" id="fig|257313.5.peg.2620"/>
<dbReference type="eggNOG" id="COG1159">
    <property type="taxonomic scope" value="Bacteria"/>
</dbReference>
<dbReference type="HOGENOM" id="CLU_038009_1_0_4"/>
<dbReference type="Proteomes" id="UP000002676">
    <property type="component" value="Chromosome"/>
</dbReference>
<dbReference type="GO" id="GO:0005829">
    <property type="term" value="C:cytosol"/>
    <property type="evidence" value="ECO:0007669"/>
    <property type="project" value="TreeGrafter"/>
</dbReference>
<dbReference type="GO" id="GO:0005886">
    <property type="term" value="C:plasma membrane"/>
    <property type="evidence" value="ECO:0007669"/>
    <property type="project" value="UniProtKB-SubCell"/>
</dbReference>
<dbReference type="GO" id="GO:0005525">
    <property type="term" value="F:GTP binding"/>
    <property type="evidence" value="ECO:0007669"/>
    <property type="project" value="UniProtKB-UniRule"/>
</dbReference>
<dbReference type="GO" id="GO:0003924">
    <property type="term" value="F:GTPase activity"/>
    <property type="evidence" value="ECO:0007669"/>
    <property type="project" value="UniProtKB-UniRule"/>
</dbReference>
<dbReference type="GO" id="GO:0043024">
    <property type="term" value="F:ribosomal small subunit binding"/>
    <property type="evidence" value="ECO:0007669"/>
    <property type="project" value="TreeGrafter"/>
</dbReference>
<dbReference type="GO" id="GO:0070181">
    <property type="term" value="F:small ribosomal subunit rRNA binding"/>
    <property type="evidence" value="ECO:0007669"/>
    <property type="project" value="UniProtKB-UniRule"/>
</dbReference>
<dbReference type="GO" id="GO:0000028">
    <property type="term" value="P:ribosomal small subunit assembly"/>
    <property type="evidence" value="ECO:0007669"/>
    <property type="project" value="TreeGrafter"/>
</dbReference>
<dbReference type="CDD" id="cd04163">
    <property type="entry name" value="Era"/>
    <property type="match status" value="1"/>
</dbReference>
<dbReference type="CDD" id="cd22534">
    <property type="entry name" value="KH-II_Era"/>
    <property type="match status" value="1"/>
</dbReference>
<dbReference type="Gene3D" id="3.30.300.20">
    <property type="match status" value="1"/>
</dbReference>
<dbReference type="Gene3D" id="3.40.50.300">
    <property type="entry name" value="P-loop containing nucleotide triphosphate hydrolases"/>
    <property type="match status" value="1"/>
</dbReference>
<dbReference type="HAMAP" id="MF_00367">
    <property type="entry name" value="GTPase_Era"/>
    <property type="match status" value="1"/>
</dbReference>
<dbReference type="InterPro" id="IPR030388">
    <property type="entry name" value="G_ERA_dom"/>
</dbReference>
<dbReference type="InterPro" id="IPR006073">
    <property type="entry name" value="GTP-bd"/>
</dbReference>
<dbReference type="InterPro" id="IPR005662">
    <property type="entry name" value="GTPase_Era-like"/>
</dbReference>
<dbReference type="InterPro" id="IPR015946">
    <property type="entry name" value="KH_dom-like_a/b"/>
</dbReference>
<dbReference type="InterPro" id="IPR004044">
    <property type="entry name" value="KH_dom_type_2"/>
</dbReference>
<dbReference type="InterPro" id="IPR009019">
    <property type="entry name" value="KH_sf_prok-type"/>
</dbReference>
<dbReference type="InterPro" id="IPR027417">
    <property type="entry name" value="P-loop_NTPase"/>
</dbReference>
<dbReference type="InterPro" id="IPR005225">
    <property type="entry name" value="Small_GTP-bd"/>
</dbReference>
<dbReference type="NCBIfam" id="TIGR00436">
    <property type="entry name" value="era"/>
    <property type="match status" value="1"/>
</dbReference>
<dbReference type="NCBIfam" id="NF000908">
    <property type="entry name" value="PRK00089.1"/>
    <property type="match status" value="1"/>
</dbReference>
<dbReference type="NCBIfam" id="TIGR00231">
    <property type="entry name" value="small_GTP"/>
    <property type="match status" value="1"/>
</dbReference>
<dbReference type="PANTHER" id="PTHR42698">
    <property type="entry name" value="GTPASE ERA"/>
    <property type="match status" value="1"/>
</dbReference>
<dbReference type="PANTHER" id="PTHR42698:SF1">
    <property type="entry name" value="GTPASE ERA, MITOCHONDRIAL"/>
    <property type="match status" value="1"/>
</dbReference>
<dbReference type="Pfam" id="PF07650">
    <property type="entry name" value="KH_2"/>
    <property type="match status" value="1"/>
</dbReference>
<dbReference type="Pfam" id="PF01926">
    <property type="entry name" value="MMR_HSR1"/>
    <property type="match status" value="1"/>
</dbReference>
<dbReference type="PRINTS" id="PR00326">
    <property type="entry name" value="GTP1OBG"/>
</dbReference>
<dbReference type="SUPFAM" id="SSF52540">
    <property type="entry name" value="P-loop containing nucleoside triphosphate hydrolases"/>
    <property type="match status" value="1"/>
</dbReference>
<dbReference type="SUPFAM" id="SSF54814">
    <property type="entry name" value="Prokaryotic type KH domain (KH-domain type II)"/>
    <property type="match status" value="1"/>
</dbReference>
<dbReference type="PROSITE" id="PS51713">
    <property type="entry name" value="G_ERA"/>
    <property type="match status" value="1"/>
</dbReference>
<name>ERA_BORPE</name>
<organism>
    <name type="scientific">Bordetella pertussis (strain Tohama I / ATCC BAA-589 / NCTC 13251)</name>
    <dbReference type="NCBI Taxonomy" id="257313"/>
    <lineage>
        <taxon>Bacteria</taxon>
        <taxon>Pseudomonadati</taxon>
        <taxon>Pseudomonadota</taxon>
        <taxon>Betaproteobacteria</taxon>
        <taxon>Burkholderiales</taxon>
        <taxon>Alcaligenaceae</taxon>
        <taxon>Bordetella</taxon>
    </lineage>
</organism>
<feature type="chain" id="PRO_1000121306" description="GTPase Era">
    <location>
        <begin position="1"/>
        <end position="296"/>
    </location>
</feature>
<feature type="domain" description="Era-type G" evidence="2">
    <location>
        <begin position="7"/>
        <end position="174"/>
    </location>
</feature>
<feature type="domain" description="KH type-2" evidence="1">
    <location>
        <begin position="205"/>
        <end position="281"/>
    </location>
</feature>
<feature type="region of interest" description="G1" evidence="2">
    <location>
        <begin position="15"/>
        <end position="22"/>
    </location>
</feature>
<feature type="region of interest" description="G2" evidence="2">
    <location>
        <begin position="41"/>
        <end position="45"/>
    </location>
</feature>
<feature type="region of interest" description="G3" evidence="2">
    <location>
        <begin position="62"/>
        <end position="65"/>
    </location>
</feature>
<feature type="region of interest" description="G4" evidence="2">
    <location>
        <begin position="123"/>
        <end position="126"/>
    </location>
</feature>
<feature type="region of interest" description="G5" evidence="2">
    <location>
        <begin position="153"/>
        <end position="155"/>
    </location>
</feature>
<feature type="binding site" evidence="1">
    <location>
        <begin position="15"/>
        <end position="22"/>
    </location>
    <ligand>
        <name>GTP</name>
        <dbReference type="ChEBI" id="CHEBI:37565"/>
    </ligand>
</feature>
<feature type="binding site" evidence="1">
    <location>
        <begin position="62"/>
        <end position="66"/>
    </location>
    <ligand>
        <name>GTP</name>
        <dbReference type="ChEBI" id="CHEBI:37565"/>
    </ligand>
</feature>
<feature type="binding site" evidence="1">
    <location>
        <begin position="123"/>
        <end position="126"/>
    </location>
    <ligand>
        <name>GTP</name>
        <dbReference type="ChEBI" id="CHEBI:37565"/>
    </ligand>
</feature>
<sequence length="296" mass="33032">MSNPQFRAGFVAIVGRPNVGKSTLTNALIGTKISIVSRKAQTTRHRIHGVLTREHEQFVFVDTPGFQTRHGGAMNRMMNRVVTQALADVDVVVHVVEAGKWSEGDAKLLPLLPKSRRSILVVSKIDALKNRDELFPFVSKLMALHAYDAVVPVSATKGQQLDQLLDEIAAGLPQGDPMFEEDTLTDRPVRFIAAELVREKIFRLVGDELPYGCTVVIEQWEETERGVRIAACVVVERESHRPILLGAGGMHMKRIATEARQDIAKLLDMPVHLEIYIKVRKGWSDREGALRDLGYE</sequence>
<evidence type="ECO:0000255" key="1">
    <source>
        <dbReference type="HAMAP-Rule" id="MF_00367"/>
    </source>
</evidence>
<evidence type="ECO:0000255" key="2">
    <source>
        <dbReference type="PROSITE-ProRule" id="PRU01050"/>
    </source>
</evidence>
<reference key="1">
    <citation type="journal article" date="2003" name="Nat. Genet.">
        <title>Comparative analysis of the genome sequences of Bordetella pertussis, Bordetella parapertussis and Bordetella bronchiseptica.</title>
        <authorList>
            <person name="Parkhill J."/>
            <person name="Sebaihia M."/>
            <person name="Preston A."/>
            <person name="Murphy L.D."/>
            <person name="Thomson N.R."/>
            <person name="Harris D.E."/>
            <person name="Holden M.T.G."/>
            <person name="Churcher C.M."/>
            <person name="Bentley S.D."/>
            <person name="Mungall K.L."/>
            <person name="Cerdeno-Tarraga A.-M."/>
            <person name="Temple L."/>
            <person name="James K.D."/>
            <person name="Harris B."/>
            <person name="Quail M.A."/>
            <person name="Achtman M."/>
            <person name="Atkin R."/>
            <person name="Baker S."/>
            <person name="Basham D."/>
            <person name="Bason N."/>
            <person name="Cherevach I."/>
            <person name="Chillingworth T."/>
            <person name="Collins M."/>
            <person name="Cronin A."/>
            <person name="Davis P."/>
            <person name="Doggett J."/>
            <person name="Feltwell T."/>
            <person name="Goble A."/>
            <person name="Hamlin N."/>
            <person name="Hauser H."/>
            <person name="Holroyd S."/>
            <person name="Jagels K."/>
            <person name="Leather S."/>
            <person name="Moule S."/>
            <person name="Norberczak H."/>
            <person name="O'Neil S."/>
            <person name="Ormond D."/>
            <person name="Price C."/>
            <person name="Rabbinowitsch E."/>
            <person name="Rutter S."/>
            <person name="Sanders M."/>
            <person name="Saunders D."/>
            <person name="Seeger K."/>
            <person name="Sharp S."/>
            <person name="Simmonds M."/>
            <person name="Skelton J."/>
            <person name="Squares R."/>
            <person name="Squares S."/>
            <person name="Stevens K."/>
            <person name="Unwin L."/>
            <person name="Whitehead S."/>
            <person name="Barrell B.G."/>
            <person name="Maskell D.J."/>
        </authorList>
    </citation>
    <scope>NUCLEOTIDE SEQUENCE [LARGE SCALE GENOMIC DNA]</scope>
    <source>
        <strain>Tohama I / ATCC BAA-589 / NCTC 13251</strain>
    </source>
</reference>
<proteinExistence type="inferred from homology"/>
<comment type="function">
    <text evidence="1">An essential GTPase that binds both GDP and GTP, with rapid nucleotide exchange. Plays a role in 16S rRNA processing and 30S ribosomal subunit biogenesis and possibly also in cell cycle regulation and energy metabolism.</text>
</comment>
<comment type="subunit">
    <text evidence="1">Monomer.</text>
</comment>
<comment type="subcellular location">
    <subcellularLocation>
        <location>Cytoplasm</location>
    </subcellularLocation>
    <subcellularLocation>
        <location evidence="1">Cell inner membrane</location>
        <topology evidence="1">Peripheral membrane protein</topology>
    </subcellularLocation>
</comment>
<comment type="similarity">
    <text evidence="1 2">Belongs to the TRAFAC class TrmE-Era-EngA-EngB-Septin-like GTPase superfamily. Era GTPase family.</text>
</comment>
<gene>
    <name evidence="1" type="primary">era</name>
    <name type="ordered locus">BP2430</name>
</gene>
<accession>Q7VW40</accession>